<accession>B9JH27</accession>
<protein>
    <recommendedName>
        <fullName evidence="1">3-methyl-2-oxobutanoate hydroxymethyltransferase</fullName>
        <ecNumber evidence="1">2.1.2.11</ecNumber>
    </recommendedName>
    <alternativeName>
        <fullName evidence="1">Ketopantoate hydroxymethyltransferase</fullName>
        <shortName evidence="1">KPHMT</shortName>
    </alternativeName>
</protein>
<dbReference type="EC" id="2.1.2.11" evidence="1"/>
<dbReference type="EMBL" id="CP000628">
    <property type="protein sequence ID" value="ACM27024.1"/>
    <property type="molecule type" value="Genomic_DNA"/>
</dbReference>
<dbReference type="RefSeq" id="WP_012651803.1">
    <property type="nucleotide sequence ID" value="NC_011985.1"/>
</dbReference>
<dbReference type="SMR" id="B9JH27"/>
<dbReference type="STRING" id="311403.Arad_2963"/>
<dbReference type="GeneID" id="86848894"/>
<dbReference type="KEGG" id="ara:Arad_2963"/>
<dbReference type="eggNOG" id="COG0413">
    <property type="taxonomic scope" value="Bacteria"/>
</dbReference>
<dbReference type="HOGENOM" id="CLU_036645_1_0_5"/>
<dbReference type="UniPathway" id="UPA00028">
    <property type="reaction ID" value="UER00003"/>
</dbReference>
<dbReference type="Proteomes" id="UP000001600">
    <property type="component" value="Chromosome 1"/>
</dbReference>
<dbReference type="GO" id="GO:0005737">
    <property type="term" value="C:cytoplasm"/>
    <property type="evidence" value="ECO:0007669"/>
    <property type="project" value="UniProtKB-SubCell"/>
</dbReference>
<dbReference type="GO" id="GO:0003864">
    <property type="term" value="F:3-methyl-2-oxobutanoate hydroxymethyltransferase activity"/>
    <property type="evidence" value="ECO:0007669"/>
    <property type="project" value="UniProtKB-UniRule"/>
</dbReference>
<dbReference type="GO" id="GO:0000287">
    <property type="term" value="F:magnesium ion binding"/>
    <property type="evidence" value="ECO:0007669"/>
    <property type="project" value="TreeGrafter"/>
</dbReference>
<dbReference type="GO" id="GO:0015940">
    <property type="term" value="P:pantothenate biosynthetic process"/>
    <property type="evidence" value="ECO:0007669"/>
    <property type="project" value="UniProtKB-UniRule"/>
</dbReference>
<dbReference type="CDD" id="cd06557">
    <property type="entry name" value="KPHMT-like"/>
    <property type="match status" value="1"/>
</dbReference>
<dbReference type="FunFam" id="3.20.20.60:FF:000003">
    <property type="entry name" value="3-methyl-2-oxobutanoate hydroxymethyltransferase"/>
    <property type="match status" value="1"/>
</dbReference>
<dbReference type="Gene3D" id="3.20.20.60">
    <property type="entry name" value="Phosphoenolpyruvate-binding domains"/>
    <property type="match status" value="1"/>
</dbReference>
<dbReference type="HAMAP" id="MF_00156">
    <property type="entry name" value="PanB"/>
    <property type="match status" value="1"/>
</dbReference>
<dbReference type="InterPro" id="IPR003700">
    <property type="entry name" value="Pantoate_hydroxy_MeTrfase"/>
</dbReference>
<dbReference type="InterPro" id="IPR015813">
    <property type="entry name" value="Pyrv/PenolPyrv_kinase-like_dom"/>
</dbReference>
<dbReference type="InterPro" id="IPR040442">
    <property type="entry name" value="Pyrv_kinase-like_dom_sf"/>
</dbReference>
<dbReference type="NCBIfam" id="TIGR00222">
    <property type="entry name" value="panB"/>
    <property type="match status" value="1"/>
</dbReference>
<dbReference type="NCBIfam" id="NF001452">
    <property type="entry name" value="PRK00311.1"/>
    <property type="match status" value="1"/>
</dbReference>
<dbReference type="PANTHER" id="PTHR20881">
    <property type="entry name" value="3-METHYL-2-OXOBUTANOATE HYDROXYMETHYLTRANSFERASE"/>
    <property type="match status" value="1"/>
</dbReference>
<dbReference type="PANTHER" id="PTHR20881:SF0">
    <property type="entry name" value="3-METHYL-2-OXOBUTANOATE HYDROXYMETHYLTRANSFERASE"/>
    <property type="match status" value="1"/>
</dbReference>
<dbReference type="Pfam" id="PF02548">
    <property type="entry name" value="Pantoate_transf"/>
    <property type="match status" value="1"/>
</dbReference>
<dbReference type="PIRSF" id="PIRSF000388">
    <property type="entry name" value="Pantoate_hydroxy_MeTrfase"/>
    <property type="match status" value="1"/>
</dbReference>
<dbReference type="SUPFAM" id="SSF51621">
    <property type="entry name" value="Phosphoenolpyruvate/pyruvate domain"/>
    <property type="match status" value="1"/>
</dbReference>
<feature type="chain" id="PRO_1000123363" description="3-methyl-2-oxobutanoate hydroxymethyltransferase">
    <location>
        <begin position="1"/>
        <end position="273"/>
    </location>
</feature>
<feature type="active site" description="Proton acceptor" evidence="1">
    <location>
        <position position="187"/>
    </location>
</feature>
<feature type="binding site" evidence="1">
    <location>
        <begin position="49"/>
        <end position="50"/>
    </location>
    <ligand>
        <name>3-methyl-2-oxobutanoate</name>
        <dbReference type="ChEBI" id="CHEBI:11851"/>
    </ligand>
</feature>
<feature type="binding site" evidence="1">
    <location>
        <position position="49"/>
    </location>
    <ligand>
        <name>Mg(2+)</name>
        <dbReference type="ChEBI" id="CHEBI:18420"/>
    </ligand>
</feature>
<feature type="binding site" evidence="1">
    <location>
        <position position="88"/>
    </location>
    <ligand>
        <name>3-methyl-2-oxobutanoate</name>
        <dbReference type="ChEBI" id="CHEBI:11851"/>
    </ligand>
</feature>
<feature type="binding site" evidence="1">
    <location>
        <position position="88"/>
    </location>
    <ligand>
        <name>Mg(2+)</name>
        <dbReference type="ChEBI" id="CHEBI:18420"/>
    </ligand>
</feature>
<feature type="binding site" evidence="1">
    <location>
        <position position="118"/>
    </location>
    <ligand>
        <name>3-methyl-2-oxobutanoate</name>
        <dbReference type="ChEBI" id="CHEBI:11851"/>
    </ligand>
</feature>
<feature type="binding site" evidence="1">
    <location>
        <position position="120"/>
    </location>
    <ligand>
        <name>Mg(2+)</name>
        <dbReference type="ChEBI" id="CHEBI:18420"/>
    </ligand>
</feature>
<reference key="1">
    <citation type="journal article" date="2009" name="J. Bacteriol.">
        <title>Genome sequences of three Agrobacterium biovars help elucidate the evolution of multichromosome genomes in bacteria.</title>
        <authorList>
            <person name="Slater S.C."/>
            <person name="Goldman B.S."/>
            <person name="Goodner B."/>
            <person name="Setubal J.C."/>
            <person name="Farrand S.K."/>
            <person name="Nester E.W."/>
            <person name="Burr T.J."/>
            <person name="Banta L."/>
            <person name="Dickerman A.W."/>
            <person name="Paulsen I."/>
            <person name="Otten L."/>
            <person name="Suen G."/>
            <person name="Welch R."/>
            <person name="Almeida N.F."/>
            <person name="Arnold F."/>
            <person name="Burton O.T."/>
            <person name="Du Z."/>
            <person name="Ewing A."/>
            <person name="Godsy E."/>
            <person name="Heisel S."/>
            <person name="Houmiel K.L."/>
            <person name="Jhaveri J."/>
            <person name="Lu J."/>
            <person name="Miller N.M."/>
            <person name="Norton S."/>
            <person name="Chen Q."/>
            <person name="Phoolcharoen W."/>
            <person name="Ohlin V."/>
            <person name="Ondrusek D."/>
            <person name="Pride N."/>
            <person name="Stricklin S.L."/>
            <person name="Sun J."/>
            <person name="Wheeler C."/>
            <person name="Wilson L."/>
            <person name="Zhu H."/>
            <person name="Wood D.W."/>
        </authorList>
    </citation>
    <scope>NUCLEOTIDE SEQUENCE [LARGE SCALE GENOMIC DNA]</scope>
    <source>
        <strain>K84 / ATCC BAA-868</strain>
    </source>
</reference>
<name>PANB_RHIR8</name>
<proteinExistence type="inferred from homology"/>
<sequence length="273" mass="29247">MSATGLTRRNTTSQIEAMKGTRPIVSLTAYTTPIARLLDPHCDLLLVGDSLGMVLYGMESTVGVTLEMMIAHGQGVMRGVQKACVIVDMPFGSYQESKEQAFRNAVRILKETGSDGVKLEGGEEMAETVAFLTARGVPVFGHVGLMPQQVKTAGGYRALGRSEEEADKIRRDAKAIEQAGAFALLVEGTVETLAREITASVGIPTIGIGASPACDGQILVSDDMLGLFSDFKPRFVKHFAQLAPTVSKAVEAYAEEVKARTFPGPEHTFQPKK</sequence>
<organism>
    <name type="scientific">Rhizobium rhizogenes (strain K84 / ATCC BAA-868)</name>
    <name type="common">Agrobacterium radiobacter</name>
    <dbReference type="NCBI Taxonomy" id="311403"/>
    <lineage>
        <taxon>Bacteria</taxon>
        <taxon>Pseudomonadati</taxon>
        <taxon>Pseudomonadota</taxon>
        <taxon>Alphaproteobacteria</taxon>
        <taxon>Hyphomicrobiales</taxon>
        <taxon>Rhizobiaceae</taxon>
        <taxon>Rhizobium/Agrobacterium group</taxon>
        <taxon>Rhizobium</taxon>
    </lineage>
</organism>
<keyword id="KW-0963">Cytoplasm</keyword>
<keyword id="KW-0460">Magnesium</keyword>
<keyword id="KW-0479">Metal-binding</keyword>
<keyword id="KW-0566">Pantothenate biosynthesis</keyword>
<keyword id="KW-0808">Transferase</keyword>
<evidence type="ECO:0000255" key="1">
    <source>
        <dbReference type="HAMAP-Rule" id="MF_00156"/>
    </source>
</evidence>
<comment type="function">
    <text evidence="1">Catalyzes the reversible reaction in which hydroxymethyl group from 5,10-methylenetetrahydrofolate is transferred onto alpha-ketoisovalerate to form ketopantoate.</text>
</comment>
<comment type="catalytic activity">
    <reaction evidence="1">
        <text>3-methyl-2-oxobutanoate + (6R)-5,10-methylene-5,6,7,8-tetrahydrofolate + H2O = 2-dehydropantoate + (6S)-5,6,7,8-tetrahydrofolate</text>
        <dbReference type="Rhea" id="RHEA:11824"/>
        <dbReference type="ChEBI" id="CHEBI:11561"/>
        <dbReference type="ChEBI" id="CHEBI:11851"/>
        <dbReference type="ChEBI" id="CHEBI:15377"/>
        <dbReference type="ChEBI" id="CHEBI:15636"/>
        <dbReference type="ChEBI" id="CHEBI:57453"/>
        <dbReference type="EC" id="2.1.2.11"/>
    </reaction>
</comment>
<comment type="cofactor">
    <cofactor evidence="1">
        <name>Mg(2+)</name>
        <dbReference type="ChEBI" id="CHEBI:18420"/>
    </cofactor>
    <text evidence="1">Binds 1 Mg(2+) ion per subunit.</text>
</comment>
<comment type="pathway">
    <text evidence="1">Cofactor biosynthesis; (R)-pantothenate biosynthesis; (R)-pantoate from 3-methyl-2-oxobutanoate: step 1/2.</text>
</comment>
<comment type="subunit">
    <text evidence="1">Homodecamer; pentamer of dimers.</text>
</comment>
<comment type="subcellular location">
    <subcellularLocation>
        <location evidence="1">Cytoplasm</location>
    </subcellularLocation>
</comment>
<comment type="similarity">
    <text evidence="1">Belongs to the PanB family.</text>
</comment>
<gene>
    <name evidence="1" type="primary">panB</name>
    <name type="ordered locus">Arad_2963</name>
</gene>